<evidence type="ECO:0000255" key="1">
    <source>
        <dbReference type="HAMAP-Rule" id="MF_00002"/>
    </source>
</evidence>
<evidence type="ECO:0000305" key="2"/>
<organism>
    <name type="scientific">Yersinia pestis</name>
    <dbReference type="NCBI Taxonomy" id="632"/>
    <lineage>
        <taxon>Bacteria</taxon>
        <taxon>Pseudomonadati</taxon>
        <taxon>Pseudomonadota</taxon>
        <taxon>Gammaproteobacteria</taxon>
        <taxon>Enterobacterales</taxon>
        <taxon>Yersiniaceae</taxon>
        <taxon>Yersinia</taxon>
    </lineage>
</organism>
<sequence length="154" mass="17337">MTQDYKLQVEAIKCGTVIDHIPAQIGFKLLSLFKLTATDQRITIGLNLPSKRSGRKDLIKIENTFLTEQQANQLAMYAPDATVNRIDNYEVVKKLTLSLPERIDAVLTCPNSNCISHNEPVDSSFTVKAQRGEISLKCKYCEKEFDHLTVLHAD</sequence>
<name>PYRI_YERPE</name>
<proteinExistence type="inferred from homology"/>
<comment type="function">
    <text evidence="1">Involved in allosteric regulation of aspartate carbamoyltransferase.</text>
</comment>
<comment type="cofactor">
    <cofactor evidence="1">
        <name>Zn(2+)</name>
        <dbReference type="ChEBI" id="CHEBI:29105"/>
    </cofactor>
    <text evidence="1">Binds 1 zinc ion per subunit.</text>
</comment>
<comment type="subunit">
    <text evidence="1">Contains catalytic and regulatory chains.</text>
</comment>
<comment type="similarity">
    <text evidence="1">Belongs to the PyrI family.</text>
</comment>
<comment type="sequence caution" evidence="2">
    <conflict type="erroneous initiation">
        <sequence resource="EMBL-CDS" id="AAM83756"/>
    </conflict>
</comment>
<comment type="sequence caution" evidence="2">
    <conflict type="erroneous initiation">
        <sequence resource="EMBL-CDS" id="AAS63989"/>
    </conflict>
</comment>
<dbReference type="EMBL" id="AL590842">
    <property type="protein sequence ID" value="CAL22176.1"/>
    <property type="molecule type" value="Genomic_DNA"/>
</dbReference>
<dbReference type="EMBL" id="AE009952">
    <property type="protein sequence ID" value="AAM83756.1"/>
    <property type="status" value="ALT_INIT"/>
    <property type="molecule type" value="Genomic_DNA"/>
</dbReference>
<dbReference type="EMBL" id="AE017042">
    <property type="protein sequence ID" value="AAS63989.1"/>
    <property type="status" value="ALT_INIT"/>
    <property type="molecule type" value="Genomic_DNA"/>
</dbReference>
<dbReference type="PIR" id="AE0436">
    <property type="entry name" value="AE0436"/>
</dbReference>
<dbReference type="RefSeq" id="WP_002210110.1">
    <property type="nucleotide sequence ID" value="NZ_WUCM01000032.1"/>
</dbReference>
<dbReference type="RefSeq" id="YP_002348474.1">
    <property type="nucleotide sequence ID" value="NC_003143.1"/>
</dbReference>
<dbReference type="SMR" id="Q8ZB38"/>
<dbReference type="STRING" id="214092.YPO3589"/>
<dbReference type="PaxDb" id="214092-YPO3589"/>
<dbReference type="DNASU" id="1145109"/>
<dbReference type="EnsemblBacteria" id="AAS63989">
    <property type="protein sequence ID" value="AAS63989"/>
    <property type="gene ID" value="YP_3843"/>
</dbReference>
<dbReference type="GeneID" id="57975127"/>
<dbReference type="KEGG" id="ype:YPO3589"/>
<dbReference type="KEGG" id="ypj:CH55_2500"/>
<dbReference type="KEGG" id="ypk:y0162"/>
<dbReference type="KEGG" id="ypl:CH46_1502"/>
<dbReference type="KEGG" id="ypm:YP_3843"/>
<dbReference type="KEGG" id="ypv:BZ15_4147"/>
<dbReference type="KEGG" id="ypw:CH59_2459"/>
<dbReference type="PATRIC" id="fig|214092.21.peg.4082"/>
<dbReference type="eggNOG" id="COG1781">
    <property type="taxonomic scope" value="Bacteria"/>
</dbReference>
<dbReference type="HOGENOM" id="CLU_128576_0_0_6"/>
<dbReference type="OMA" id="CPNRNCI"/>
<dbReference type="OrthoDB" id="5599321at2"/>
<dbReference type="Proteomes" id="UP000000815">
    <property type="component" value="Chromosome"/>
</dbReference>
<dbReference type="Proteomes" id="UP000001019">
    <property type="component" value="Chromosome"/>
</dbReference>
<dbReference type="Proteomes" id="UP000002490">
    <property type="component" value="Chromosome"/>
</dbReference>
<dbReference type="GO" id="GO:0009347">
    <property type="term" value="C:aspartate carbamoyltransferase complex"/>
    <property type="evidence" value="ECO:0000318"/>
    <property type="project" value="GO_Central"/>
</dbReference>
<dbReference type="GO" id="GO:0046872">
    <property type="term" value="F:metal ion binding"/>
    <property type="evidence" value="ECO:0007669"/>
    <property type="project" value="UniProtKB-KW"/>
</dbReference>
<dbReference type="GO" id="GO:0006207">
    <property type="term" value="P:'de novo' pyrimidine nucleobase biosynthetic process"/>
    <property type="evidence" value="ECO:0000318"/>
    <property type="project" value="GO_Central"/>
</dbReference>
<dbReference type="GO" id="GO:0006221">
    <property type="term" value="P:pyrimidine nucleotide biosynthetic process"/>
    <property type="evidence" value="ECO:0007669"/>
    <property type="project" value="UniProtKB-UniRule"/>
</dbReference>
<dbReference type="FunFam" id="3.30.70.140:FF:000001">
    <property type="entry name" value="Aspartate carbamoyltransferase regulatory chain"/>
    <property type="match status" value="1"/>
</dbReference>
<dbReference type="Gene3D" id="2.30.30.20">
    <property type="entry name" value="Aspartate carbamoyltransferase regulatory subunit, C-terminal domain"/>
    <property type="match status" value="1"/>
</dbReference>
<dbReference type="Gene3D" id="3.30.70.140">
    <property type="entry name" value="Aspartate carbamoyltransferase regulatory subunit, N-terminal domain"/>
    <property type="match status" value="1"/>
</dbReference>
<dbReference type="HAMAP" id="MF_00002">
    <property type="entry name" value="Asp_carb_tr_reg"/>
    <property type="match status" value="1"/>
</dbReference>
<dbReference type="InterPro" id="IPR020545">
    <property type="entry name" value="Asp_carbamoyltransf_reg_N"/>
</dbReference>
<dbReference type="InterPro" id="IPR002801">
    <property type="entry name" value="Asp_carbamoylTrfase_reg"/>
</dbReference>
<dbReference type="InterPro" id="IPR020542">
    <property type="entry name" value="Asp_carbamoyltrfase_reg_C"/>
</dbReference>
<dbReference type="InterPro" id="IPR036792">
    <property type="entry name" value="Asp_carbatrfase_reg_C_sf"/>
</dbReference>
<dbReference type="InterPro" id="IPR036793">
    <property type="entry name" value="Asp_carbatrfase_reg_N_sf"/>
</dbReference>
<dbReference type="NCBIfam" id="TIGR00240">
    <property type="entry name" value="ATCase_reg"/>
    <property type="match status" value="1"/>
</dbReference>
<dbReference type="PANTHER" id="PTHR35805">
    <property type="entry name" value="ASPARTATE CARBAMOYLTRANSFERASE REGULATORY CHAIN"/>
    <property type="match status" value="1"/>
</dbReference>
<dbReference type="PANTHER" id="PTHR35805:SF1">
    <property type="entry name" value="ASPARTATE CARBAMOYLTRANSFERASE REGULATORY CHAIN"/>
    <property type="match status" value="1"/>
</dbReference>
<dbReference type="Pfam" id="PF01948">
    <property type="entry name" value="PyrI"/>
    <property type="match status" value="1"/>
</dbReference>
<dbReference type="Pfam" id="PF02748">
    <property type="entry name" value="PyrI_C"/>
    <property type="match status" value="1"/>
</dbReference>
<dbReference type="SUPFAM" id="SSF57825">
    <property type="entry name" value="Aspartate carbamoyltransferase, Regulatory-chain, C-terminal domain"/>
    <property type="match status" value="1"/>
</dbReference>
<dbReference type="SUPFAM" id="SSF54893">
    <property type="entry name" value="Aspartate carbamoyltransferase, Regulatory-chain, N-terminal domain"/>
    <property type="match status" value="1"/>
</dbReference>
<feature type="chain" id="PRO_0000142324" description="Aspartate carbamoyltransferase regulatory chain">
    <location>
        <begin position="1"/>
        <end position="154"/>
    </location>
</feature>
<feature type="binding site" evidence="1">
    <location>
        <position position="109"/>
    </location>
    <ligand>
        <name>Zn(2+)</name>
        <dbReference type="ChEBI" id="CHEBI:29105"/>
    </ligand>
</feature>
<feature type="binding site" evidence="1">
    <location>
        <position position="114"/>
    </location>
    <ligand>
        <name>Zn(2+)</name>
        <dbReference type="ChEBI" id="CHEBI:29105"/>
    </ligand>
</feature>
<feature type="binding site" evidence="1">
    <location>
        <position position="138"/>
    </location>
    <ligand>
        <name>Zn(2+)</name>
        <dbReference type="ChEBI" id="CHEBI:29105"/>
    </ligand>
</feature>
<feature type="binding site" evidence="1">
    <location>
        <position position="141"/>
    </location>
    <ligand>
        <name>Zn(2+)</name>
        <dbReference type="ChEBI" id="CHEBI:29105"/>
    </ligand>
</feature>
<gene>
    <name evidence="1" type="primary">pyrI</name>
    <name type="ordered locus">YPO3589</name>
    <name type="ordered locus">y0162</name>
    <name type="ordered locus">YP_3843</name>
</gene>
<keyword id="KW-0479">Metal-binding</keyword>
<keyword id="KW-0665">Pyrimidine biosynthesis</keyword>
<keyword id="KW-1185">Reference proteome</keyword>
<keyword id="KW-0862">Zinc</keyword>
<reference key="1">
    <citation type="journal article" date="2001" name="Nature">
        <title>Genome sequence of Yersinia pestis, the causative agent of plague.</title>
        <authorList>
            <person name="Parkhill J."/>
            <person name="Wren B.W."/>
            <person name="Thomson N.R."/>
            <person name="Titball R.W."/>
            <person name="Holden M.T.G."/>
            <person name="Prentice M.B."/>
            <person name="Sebaihia M."/>
            <person name="James K.D."/>
            <person name="Churcher C.M."/>
            <person name="Mungall K.L."/>
            <person name="Baker S."/>
            <person name="Basham D."/>
            <person name="Bentley S.D."/>
            <person name="Brooks K."/>
            <person name="Cerdeno-Tarraga A.-M."/>
            <person name="Chillingworth T."/>
            <person name="Cronin A."/>
            <person name="Davies R.M."/>
            <person name="Davis P."/>
            <person name="Dougan G."/>
            <person name="Feltwell T."/>
            <person name="Hamlin N."/>
            <person name="Holroyd S."/>
            <person name="Jagels K."/>
            <person name="Karlyshev A.V."/>
            <person name="Leather S."/>
            <person name="Moule S."/>
            <person name="Oyston P.C.F."/>
            <person name="Quail M.A."/>
            <person name="Rutherford K.M."/>
            <person name="Simmonds M."/>
            <person name="Skelton J."/>
            <person name="Stevens K."/>
            <person name="Whitehead S."/>
            <person name="Barrell B.G."/>
        </authorList>
    </citation>
    <scope>NUCLEOTIDE SEQUENCE [LARGE SCALE GENOMIC DNA]</scope>
    <source>
        <strain>CO-92 / Biovar Orientalis</strain>
    </source>
</reference>
<reference key="2">
    <citation type="journal article" date="2002" name="J. Bacteriol.">
        <title>Genome sequence of Yersinia pestis KIM.</title>
        <authorList>
            <person name="Deng W."/>
            <person name="Burland V."/>
            <person name="Plunkett G. III"/>
            <person name="Boutin A."/>
            <person name="Mayhew G.F."/>
            <person name="Liss P."/>
            <person name="Perna N.T."/>
            <person name="Rose D.J."/>
            <person name="Mau B."/>
            <person name="Zhou S."/>
            <person name="Schwartz D.C."/>
            <person name="Fetherston J.D."/>
            <person name="Lindler L.E."/>
            <person name="Brubaker R.R."/>
            <person name="Plano G.V."/>
            <person name="Straley S.C."/>
            <person name="McDonough K.A."/>
            <person name="Nilles M.L."/>
            <person name="Matson J.S."/>
            <person name="Blattner F.R."/>
            <person name="Perry R.D."/>
        </authorList>
    </citation>
    <scope>NUCLEOTIDE SEQUENCE [LARGE SCALE GENOMIC DNA]</scope>
    <source>
        <strain>KIM10+ / Biovar Mediaevalis</strain>
    </source>
</reference>
<reference key="3">
    <citation type="journal article" date="2004" name="DNA Res.">
        <title>Complete genome sequence of Yersinia pestis strain 91001, an isolate avirulent to humans.</title>
        <authorList>
            <person name="Song Y."/>
            <person name="Tong Z."/>
            <person name="Wang J."/>
            <person name="Wang L."/>
            <person name="Guo Z."/>
            <person name="Han Y."/>
            <person name="Zhang J."/>
            <person name="Pei D."/>
            <person name="Zhou D."/>
            <person name="Qin H."/>
            <person name="Pang X."/>
            <person name="Han Y."/>
            <person name="Zhai J."/>
            <person name="Li M."/>
            <person name="Cui B."/>
            <person name="Qi Z."/>
            <person name="Jin L."/>
            <person name="Dai R."/>
            <person name="Chen F."/>
            <person name="Li S."/>
            <person name="Ye C."/>
            <person name="Du Z."/>
            <person name="Lin W."/>
            <person name="Wang J."/>
            <person name="Yu J."/>
            <person name="Yang H."/>
            <person name="Wang J."/>
            <person name="Huang P."/>
            <person name="Yang R."/>
        </authorList>
    </citation>
    <scope>NUCLEOTIDE SEQUENCE [LARGE SCALE GENOMIC DNA]</scope>
    <source>
        <strain>91001 / Biovar Mediaevalis</strain>
    </source>
</reference>
<protein>
    <recommendedName>
        <fullName evidence="1">Aspartate carbamoyltransferase regulatory chain</fullName>
    </recommendedName>
</protein>
<accession>Q8ZB38</accession>
<accession>Q0WB64</accession>